<organism>
    <name type="scientific">Human papillomavirus 45</name>
    <dbReference type="NCBI Taxonomy" id="10593"/>
    <lineage>
        <taxon>Viruses</taxon>
        <taxon>Monodnaviria</taxon>
        <taxon>Shotokuvirae</taxon>
        <taxon>Cossaviricota</taxon>
        <taxon>Papovaviricetes</taxon>
        <taxon>Zurhausenvirales</taxon>
        <taxon>Papillomaviridae</taxon>
        <taxon>Firstpapillomavirinae</taxon>
        <taxon>Alphapapillomavirus</taxon>
        <taxon>Alphapapillomavirus 7</taxon>
    </lineage>
</organism>
<protein>
    <recommendedName>
        <fullName evidence="1">Regulatory protein E2</fullName>
    </recommendedName>
</protein>
<keyword id="KW-0010">Activator</keyword>
<keyword id="KW-0235">DNA replication</keyword>
<keyword id="KW-0238">DNA-binding</keyword>
<keyword id="KW-0244">Early protein</keyword>
<keyword id="KW-1048">Host nucleus</keyword>
<keyword id="KW-1017">Isopeptide bond</keyword>
<keyword id="KW-0597">Phosphoprotein</keyword>
<keyword id="KW-0678">Repressor</keyword>
<keyword id="KW-0804">Transcription</keyword>
<keyword id="KW-0805">Transcription regulation</keyword>
<keyword id="KW-0832">Ubl conjugation</keyword>
<dbReference type="EMBL" id="X74479">
    <property type="protein sequence ID" value="CAA52576.1"/>
    <property type="molecule type" value="Genomic_DNA"/>
</dbReference>
<dbReference type="PIR" id="S36564">
    <property type="entry name" value="S36564"/>
</dbReference>
<dbReference type="SMR" id="P36794"/>
<dbReference type="Proteomes" id="UP000008695">
    <property type="component" value="Genome"/>
</dbReference>
<dbReference type="GO" id="GO:0042025">
    <property type="term" value="C:host cell nucleus"/>
    <property type="evidence" value="ECO:0007669"/>
    <property type="project" value="UniProtKB-SubCell"/>
</dbReference>
<dbReference type="GO" id="GO:0003677">
    <property type="term" value="F:DNA binding"/>
    <property type="evidence" value="ECO:0007669"/>
    <property type="project" value="UniProtKB-UniRule"/>
</dbReference>
<dbReference type="GO" id="GO:0003700">
    <property type="term" value="F:DNA-binding transcription factor activity"/>
    <property type="evidence" value="ECO:0007669"/>
    <property type="project" value="UniProtKB-UniRule"/>
</dbReference>
<dbReference type="GO" id="GO:0000166">
    <property type="term" value="F:nucleotide binding"/>
    <property type="evidence" value="ECO:0007669"/>
    <property type="project" value="UniProtKB-UniRule"/>
</dbReference>
<dbReference type="GO" id="GO:0006260">
    <property type="term" value="P:DNA replication"/>
    <property type="evidence" value="ECO:0007669"/>
    <property type="project" value="UniProtKB-KW"/>
</dbReference>
<dbReference type="GO" id="GO:0006351">
    <property type="term" value="P:DNA-templated transcription"/>
    <property type="evidence" value="ECO:0007669"/>
    <property type="project" value="UniProtKB-UniRule"/>
</dbReference>
<dbReference type="GO" id="GO:0006275">
    <property type="term" value="P:regulation of DNA replication"/>
    <property type="evidence" value="ECO:0007669"/>
    <property type="project" value="UniProtKB-UniRule"/>
</dbReference>
<dbReference type="GO" id="GO:0039693">
    <property type="term" value="P:viral DNA genome replication"/>
    <property type="evidence" value="ECO:0007669"/>
    <property type="project" value="UniProtKB-UniRule"/>
</dbReference>
<dbReference type="Gene3D" id="3.30.70.330">
    <property type="match status" value="1"/>
</dbReference>
<dbReference type="Gene3D" id="1.10.287.30">
    <property type="entry name" value="E2 (early) protein, N terminal domain, subdomain 1"/>
    <property type="match status" value="1"/>
</dbReference>
<dbReference type="Gene3D" id="2.170.200.10">
    <property type="entry name" value="Papillomavirus E2 early protein domain"/>
    <property type="match status" value="1"/>
</dbReference>
<dbReference type="HAMAP" id="MF_04001">
    <property type="entry name" value="PPV_E2"/>
    <property type="match status" value="1"/>
</dbReference>
<dbReference type="InterPro" id="IPR035975">
    <property type="entry name" value="E2/EBNA1_C_sf"/>
</dbReference>
<dbReference type="InterPro" id="IPR012677">
    <property type="entry name" value="Nucleotide-bd_a/b_plait_sf"/>
</dbReference>
<dbReference type="InterPro" id="IPR000427">
    <property type="entry name" value="Papillomavirus_E2_C"/>
</dbReference>
<dbReference type="InterPro" id="IPR001866">
    <property type="entry name" value="PPV_E2_N"/>
</dbReference>
<dbReference type="InterPro" id="IPR033668">
    <property type="entry name" value="Reg_prot_E2"/>
</dbReference>
<dbReference type="InterPro" id="IPR036050">
    <property type="entry name" value="Regulatory_protein_E2_N"/>
</dbReference>
<dbReference type="InterPro" id="IPR042503">
    <property type="entry name" value="Regulatory_protein_E2_N_1"/>
</dbReference>
<dbReference type="InterPro" id="IPR042504">
    <property type="entry name" value="Regulatory_protein_E2_N_2"/>
</dbReference>
<dbReference type="Pfam" id="PF00511">
    <property type="entry name" value="PPV_E2_C"/>
    <property type="match status" value="1"/>
</dbReference>
<dbReference type="Pfam" id="PF00508">
    <property type="entry name" value="PPV_E2_N"/>
    <property type="match status" value="1"/>
</dbReference>
<dbReference type="SUPFAM" id="SSF51332">
    <property type="entry name" value="E2 regulatory, transactivation domain"/>
    <property type="match status" value="1"/>
</dbReference>
<dbReference type="SUPFAM" id="SSF54957">
    <property type="entry name" value="Viral DNA-binding domain"/>
    <property type="match status" value="1"/>
</dbReference>
<organismHost>
    <name type="scientific">Homo sapiens</name>
    <name type="common">Human</name>
    <dbReference type="NCBI Taxonomy" id="9606"/>
</organismHost>
<gene>
    <name evidence="1" type="primary">E2</name>
</gene>
<name>VE2_HPV45</name>
<sequence>MKMQTPKESLSERLSALQDKILDHYENDSKDINSQISYWQLIRLENAILFTAREHGITKLNHQVVPPINISKSKAHKAIELQMALKGLAQSKYNNEEWTLQDTCEELWNTEPSQCFKKGGKTVHVYFDGNKDNCMNYVVWDSIYYITETGIWDKTAACVSYWGVYYIKDGDTTYYVQFKSECEKYGNSNTWEVQYGGNVIDCNDSMCSTSDDTVSATQIVRQLQHASTSTPKTASVGTPKPHIQTPATKRPRQCGLTEQHHGRVNTHVHNPLLCSSTSNNKRRKVCSGNTTPIIHLKGDKNSLKCLRYRLRKYADHYSEISSTWHWTGCNKNTGILTVTYNSEVQRNTFLDVVTIPNSVQISVGYMTI</sequence>
<evidence type="ECO:0000255" key="1">
    <source>
        <dbReference type="HAMAP-Rule" id="MF_04001"/>
    </source>
</evidence>
<evidence type="ECO:0000256" key="2">
    <source>
        <dbReference type="SAM" id="MobiDB-lite"/>
    </source>
</evidence>
<comment type="function">
    <text evidence="1">Plays a role in the initiation of viral DNA replication. A dimer of E2 interacts with a dimer of E1 in order to improve specificity of E1 DNA binding activity. Once the complex recognizes and binds DNA at specific sites, the E2 dimer is removed from DNA. E2 also regulates viral transcription through binding to the E2RE response element (5'-ACCNNNNNNGGT-3') present in multiple copies in the regulatory regions of the viral genome. Activates or represses transcription depending on E2RE's position with regards to proximal promoter elements including the TATA-box. Repression occurs by sterically hindering the assembly of the transcription initiation complex.</text>
</comment>
<comment type="subunit">
    <text evidence="1">Binds DNA as homodimer. Interacts with protein E1; this interaction greatly increases E1 DNA-binding activity. Interacts with protein L1; this interaction enhances E2-dependent replication and transcription activation. Interacts with protein L2; this interaction inhibits E2 transcriptional activity but not DNA replication function E2. Interacts with protein E7; this interaction inhibits E7 oncogenic activity. Interacts with host TAF1; this interaction modulates E2-dependent transcriptional regulation. Interacts with host BRD4; this interaction mediates E2 transcriptional activation function. Additionally, the interaction with host BRD4 on mitotic chromosomes mediates tethering of the viral genome. Interacts with host TOPBP1; this interaction is required for optimal viral DNA replication.</text>
</comment>
<comment type="subcellular location">
    <subcellularLocation>
        <location evidence="1">Host nucleus</location>
    </subcellularLocation>
</comment>
<comment type="PTM">
    <text evidence="1">Phosphorylated.</text>
</comment>
<comment type="PTM">
    <text evidence="1">Sumoylation plays a regulatory role in E2 transcriptional activity.</text>
</comment>
<comment type="similarity">
    <text evidence="1">Belongs to the papillomaviridae E2 protein family.</text>
</comment>
<feature type="chain" id="PRO_0000133224" description="Regulatory protein E2">
    <location>
        <begin position="1"/>
        <end position="368"/>
    </location>
</feature>
<feature type="region of interest" description="Transactivation domain" evidence="1">
    <location>
        <begin position="1"/>
        <end position="207"/>
    </location>
</feature>
<feature type="region of interest" description="Disordered" evidence="2">
    <location>
        <begin position="227"/>
        <end position="251"/>
    </location>
</feature>
<feature type="region of interest" description="DNA-binding domain" evidence="1">
    <location>
        <begin position="290"/>
        <end position="368"/>
    </location>
</feature>
<feature type="compositionally biased region" description="Polar residues" evidence="2">
    <location>
        <begin position="227"/>
        <end position="236"/>
    </location>
</feature>
<feature type="cross-link" description="Glycyl lysine isopeptide (Lys-Gly) (interchain with G-Cter in SUMO)" evidence="1">
    <location>
        <position position="297"/>
    </location>
</feature>
<reference key="1">
    <citation type="journal article" date="1994" name="Curr. Top. Microbiol. Immunol.">
        <title>Primer-directed sequencing of human papillomavirus types.</title>
        <authorList>
            <person name="Delius H."/>
            <person name="Hofmann B."/>
        </authorList>
    </citation>
    <scope>NUCLEOTIDE SEQUENCE [GENOMIC DNA]</scope>
</reference>
<proteinExistence type="inferred from homology"/>
<accession>P36794</accession>